<organism>
    <name type="scientific">Schizosaccharomyces pombe (strain 972 / ATCC 24843)</name>
    <name type="common">Fission yeast</name>
    <dbReference type="NCBI Taxonomy" id="284812"/>
    <lineage>
        <taxon>Eukaryota</taxon>
        <taxon>Fungi</taxon>
        <taxon>Dikarya</taxon>
        <taxon>Ascomycota</taxon>
        <taxon>Taphrinomycotina</taxon>
        <taxon>Schizosaccharomycetes</taxon>
        <taxon>Schizosaccharomycetales</taxon>
        <taxon>Schizosaccharomycetaceae</taxon>
        <taxon>Schizosaccharomyces</taxon>
    </lineage>
</organism>
<protein>
    <recommendedName>
        <fullName>Mitochondrial genome maintenance protein mgm101</fullName>
    </recommendedName>
</protein>
<accession>O14354</accession>
<evidence type="ECO:0000250" key="1"/>
<evidence type="ECO:0000255" key="2"/>
<evidence type="ECO:0000269" key="3">
    <source>
    </source>
</evidence>
<evidence type="ECO:0000305" key="4"/>
<sequence length="270" mass="31179">MQTMLGKPALQYFGKLSRYLYKNGEPINIWVYSRNSSFSVIPKNGLLSPKITQRFYQNSSIQYQKDKNIYEPKENLEEKELSEGFLDESRLEIPEAGHNWEKSFFGLSSQPFSKEICDLLTAPLEVDDIEIKPDGILYLPEIKYRRILNKAFGPGGWGLAPRGNTNVTSKSVSREYALVCHGRLVSVARGEQTYFDPEGIATASEGCKSNALMRCCKDLGVASELWDPRYIRVFKRENCVEVFVENVLTKKRRKLWRRKEDKFSYPYKEV</sequence>
<feature type="transit peptide" description="Mitochondrion" evidence="2">
    <location>
        <begin position="1"/>
        <end position="35"/>
    </location>
</feature>
<feature type="chain" id="PRO_0000045818" description="Mitochondrial genome maintenance protein mgm101">
    <location>
        <begin position="36"/>
        <end position="270"/>
    </location>
</feature>
<proteinExistence type="inferred from homology"/>
<reference key="1">
    <citation type="journal article" date="2002" name="Nature">
        <title>The genome sequence of Schizosaccharomyces pombe.</title>
        <authorList>
            <person name="Wood V."/>
            <person name="Gwilliam R."/>
            <person name="Rajandream M.A."/>
            <person name="Lyne M.H."/>
            <person name="Lyne R."/>
            <person name="Stewart A."/>
            <person name="Sgouros J.G."/>
            <person name="Peat N."/>
            <person name="Hayles J."/>
            <person name="Baker S.G."/>
            <person name="Basham D."/>
            <person name="Bowman S."/>
            <person name="Brooks K."/>
            <person name="Brown D."/>
            <person name="Brown S."/>
            <person name="Chillingworth T."/>
            <person name="Churcher C.M."/>
            <person name="Collins M."/>
            <person name="Connor R."/>
            <person name="Cronin A."/>
            <person name="Davis P."/>
            <person name="Feltwell T."/>
            <person name="Fraser A."/>
            <person name="Gentles S."/>
            <person name="Goble A."/>
            <person name="Hamlin N."/>
            <person name="Harris D.E."/>
            <person name="Hidalgo J."/>
            <person name="Hodgson G."/>
            <person name="Holroyd S."/>
            <person name="Hornsby T."/>
            <person name="Howarth S."/>
            <person name="Huckle E.J."/>
            <person name="Hunt S."/>
            <person name="Jagels K."/>
            <person name="James K.D."/>
            <person name="Jones L."/>
            <person name="Jones M."/>
            <person name="Leather S."/>
            <person name="McDonald S."/>
            <person name="McLean J."/>
            <person name="Mooney P."/>
            <person name="Moule S."/>
            <person name="Mungall K.L."/>
            <person name="Murphy L.D."/>
            <person name="Niblett D."/>
            <person name="Odell C."/>
            <person name="Oliver K."/>
            <person name="O'Neil S."/>
            <person name="Pearson D."/>
            <person name="Quail M.A."/>
            <person name="Rabbinowitsch E."/>
            <person name="Rutherford K.M."/>
            <person name="Rutter S."/>
            <person name="Saunders D."/>
            <person name="Seeger K."/>
            <person name="Sharp S."/>
            <person name="Skelton J."/>
            <person name="Simmonds M.N."/>
            <person name="Squares R."/>
            <person name="Squares S."/>
            <person name="Stevens K."/>
            <person name="Taylor K."/>
            <person name="Taylor R.G."/>
            <person name="Tivey A."/>
            <person name="Walsh S.V."/>
            <person name="Warren T."/>
            <person name="Whitehead S."/>
            <person name="Woodward J.R."/>
            <person name="Volckaert G."/>
            <person name="Aert R."/>
            <person name="Robben J."/>
            <person name="Grymonprez B."/>
            <person name="Weltjens I."/>
            <person name="Vanstreels E."/>
            <person name="Rieger M."/>
            <person name="Schaefer M."/>
            <person name="Mueller-Auer S."/>
            <person name="Gabel C."/>
            <person name="Fuchs M."/>
            <person name="Duesterhoeft A."/>
            <person name="Fritzc C."/>
            <person name="Holzer E."/>
            <person name="Moestl D."/>
            <person name="Hilbert H."/>
            <person name="Borzym K."/>
            <person name="Langer I."/>
            <person name="Beck A."/>
            <person name="Lehrach H."/>
            <person name="Reinhardt R."/>
            <person name="Pohl T.M."/>
            <person name="Eger P."/>
            <person name="Zimmermann W."/>
            <person name="Wedler H."/>
            <person name="Wambutt R."/>
            <person name="Purnelle B."/>
            <person name="Goffeau A."/>
            <person name="Cadieu E."/>
            <person name="Dreano S."/>
            <person name="Gloux S."/>
            <person name="Lelaure V."/>
            <person name="Mottier S."/>
            <person name="Galibert F."/>
            <person name="Aves S.J."/>
            <person name="Xiang Z."/>
            <person name="Hunt C."/>
            <person name="Moore K."/>
            <person name="Hurst S.M."/>
            <person name="Lucas M."/>
            <person name="Rochet M."/>
            <person name="Gaillardin C."/>
            <person name="Tallada V.A."/>
            <person name="Garzon A."/>
            <person name="Thode G."/>
            <person name="Daga R.R."/>
            <person name="Cruzado L."/>
            <person name="Jimenez J."/>
            <person name="Sanchez M."/>
            <person name="del Rey F."/>
            <person name="Benito J."/>
            <person name="Dominguez A."/>
            <person name="Revuelta J.L."/>
            <person name="Moreno S."/>
            <person name="Armstrong J."/>
            <person name="Forsburg S.L."/>
            <person name="Cerutti L."/>
            <person name="Lowe T."/>
            <person name="McCombie W.R."/>
            <person name="Paulsen I."/>
            <person name="Potashkin J."/>
            <person name="Shpakovski G.V."/>
            <person name="Ussery D."/>
            <person name="Barrell B.G."/>
            <person name="Nurse P."/>
        </authorList>
    </citation>
    <scope>NUCLEOTIDE SEQUENCE [LARGE SCALE GENOMIC DNA]</scope>
    <source>
        <strain>972 / ATCC 24843</strain>
    </source>
</reference>
<reference key="2">
    <citation type="journal article" date="2011" name="Science">
        <title>Comparative functional genomics of the fission yeasts.</title>
        <authorList>
            <person name="Rhind N."/>
            <person name="Chen Z."/>
            <person name="Yassour M."/>
            <person name="Thompson D.A."/>
            <person name="Haas B.J."/>
            <person name="Habib N."/>
            <person name="Wapinski I."/>
            <person name="Roy S."/>
            <person name="Lin M.F."/>
            <person name="Heiman D.I."/>
            <person name="Young S.K."/>
            <person name="Furuya K."/>
            <person name="Guo Y."/>
            <person name="Pidoux A."/>
            <person name="Chen H.M."/>
            <person name="Robbertse B."/>
            <person name="Goldberg J.M."/>
            <person name="Aoki K."/>
            <person name="Bayne E.H."/>
            <person name="Berlin A.M."/>
            <person name="Desjardins C.A."/>
            <person name="Dobbs E."/>
            <person name="Dukaj L."/>
            <person name="Fan L."/>
            <person name="FitzGerald M.G."/>
            <person name="French C."/>
            <person name="Gujja S."/>
            <person name="Hansen K."/>
            <person name="Keifenheim D."/>
            <person name="Levin J.Z."/>
            <person name="Mosher R.A."/>
            <person name="Mueller C.A."/>
            <person name="Pfiffner J."/>
            <person name="Priest M."/>
            <person name="Russ C."/>
            <person name="Smialowska A."/>
            <person name="Swoboda P."/>
            <person name="Sykes S.M."/>
            <person name="Vaughn M."/>
            <person name="Vengrova S."/>
            <person name="Yoder R."/>
            <person name="Zeng Q."/>
            <person name="Allshire R."/>
            <person name="Baulcombe D."/>
            <person name="Birren B.W."/>
            <person name="Brown W."/>
            <person name="Ekwall K."/>
            <person name="Kellis M."/>
            <person name="Leatherwood J."/>
            <person name="Levin H."/>
            <person name="Margalit H."/>
            <person name="Martienssen R."/>
            <person name="Nieduszynski C.A."/>
            <person name="Spatafora J.W."/>
            <person name="Friedman N."/>
            <person name="Dalgaard J.Z."/>
            <person name="Baumann P."/>
            <person name="Niki H."/>
            <person name="Regev A."/>
            <person name="Nusbaum C."/>
        </authorList>
    </citation>
    <scope>REVISION OF GENE MODEL</scope>
</reference>
<reference key="3">
    <citation type="journal article" date="2006" name="Nat. Biotechnol.">
        <title>ORFeome cloning and global analysis of protein localization in the fission yeast Schizosaccharomyces pombe.</title>
        <authorList>
            <person name="Matsuyama A."/>
            <person name="Arai R."/>
            <person name="Yashiroda Y."/>
            <person name="Shirai A."/>
            <person name="Kamata A."/>
            <person name="Sekido S."/>
            <person name="Kobayashi Y."/>
            <person name="Hashimoto A."/>
            <person name="Hamamoto M."/>
            <person name="Hiraoka Y."/>
            <person name="Horinouchi S."/>
            <person name="Yoshida M."/>
        </authorList>
    </citation>
    <scope>SUBCELLULAR LOCATION [LARGE SCALE ANALYSIS]</scope>
</reference>
<comment type="function">
    <text evidence="1">Performs an essential function in the repair of oxidatively damaged mtDNA that is required for the maintenance of the mitochondrial genome. Binds to DNA (By similarity).</text>
</comment>
<comment type="subcellular location">
    <subcellularLocation>
        <location evidence="3">Mitochondrion matrix</location>
        <location evidence="3">Mitochondrion nucleoid</location>
    </subcellularLocation>
</comment>
<comment type="similarity">
    <text evidence="4">Belongs to the MGM101 family.</text>
</comment>
<keyword id="KW-0227">DNA damage</keyword>
<keyword id="KW-0234">DNA repair</keyword>
<keyword id="KW-0238">DNA-binding</keyword>
<keyword id="KW-0496">Mitochondrion</keyword>
<keyword id="KW-1135">Mitochondrion nucleoid</keyword>
<keyword id="KW-1185">Reference proteome</keyword>
<keyword id="KW-0809">Transit peptide</keyword>
<dbReference type="EMBL" id="CU329671">
    <property type="protein sequence ID" value="CAB10803.2"/>
    <property type="molecule type" value="Genomic_DNA"/>
</dbReference>
<dbReference type="PIR" id="T40188">
    <property type="entry name" value="T40188"/>
</dbReference>
<dbReference type="RefSeq" id="NP_596277.2">
    <property type="nucleotide sequence ID" value="NM_001022198.2"/>
</dbReference>
<dbReference type="BioGRID" id="276802">
    <property type="interactions" value="3"/>
</dbReference>
<dbReference type="FunCoup" id="O14354">
    <property type="interactions" value="33"/>
</dbReference>
<dbReference type="STRING" id="284812.O14354"/>
<dbReference type="iPTMnet" id="O14354"/>
<dbReference type="PaxDb" id="4896-SPBC30D10.08.1"/>
<dbReference type="EnsemblFungi" id="SPBC30D10.08.1">
    <property type="protein sequence ID" value="SPBC30D10.08.1:pep"/>
    <property type="gene ID" value="SPBC30D10.08"/>
</dbReference>
<dbReference type="GeneID" id="2540271"/>
<dbReference type="KEGG" id="spo:2540271"/>
<dbReference type="PomBase" id="SPBC30D10.08">
    <property type="gene designation" value="mgm101"/>
</dbReference>
<dbReference type="VEuPathDB" id="FungiDB:SPBC30D10.08"/>
<dbReference type="eggNOG" id="ENOG502RXU4">
    <property type="taxonomic scope" value="Eukaryota"/>
</dbReference>
<dbReference type="HOGENOM" id="CLU_028692_1_1_1"/>
<dbReference type="InParanoid" id="O14354"/>
<dbReference type="OMA" id="INWETSW"/>
<dbReference type="PRO" id="PR:O14354"/>
<dbReference type="Proteomes" id="UP000002485">
    <property type="component" value="Chromosome II"/>
</dbReference>
<dbReference type="GO" id="GO:0000262">
    <property type="term" value="C:mitochondrial chromosome"/>
    <property type="evidence" value="ECO:0000266"/>
    <property type="project" value="PomBase"/>
</dbReference>
<dbReference type="GO" id="GO:0042645">
    <property type="term" value="C:mitochondrial nucleoid"/>
    <property type="evidence" value="ECO:0000318"/>
    <property type="project" value="GO_Central"/>
</dbReference>
<dbReference type="GO" id="GO:0005739">
    <property type="term" value="C:mitochondrion"/>
    <property type="evidence" value="ECO:0007005"/>
    <property type="project" value="PomBase"/>
</dbReference>
<dbReference type="GO" id="GO:0003677">
    <property type="term" value="F:DNA binding"/>
    <property type="evidence" value="ECO:0000318"/>
    <property type="project" value="GO_Central"/>
</dbReference>
<dbReference type="GO" id="GO:0003697">
    <property type="term" value="F:single-stranded DNA binding"/>
    <property type="evidence" value="ECO:0007669"/>
    <property type="project" value="InterPro"/>
</dbReference>
<dbReference type="GO" id="GO:0036297">
    <property type="term" value="P:interstrand cross-link repair"/>
    <property type="evidence" value="ECO:0000318"/>
    <property type="project" value="GO_Central"/>
</dbReference>
<dbReference type="GO" id="GO:0043504">
    <property type="term" value="P:mitochondrial DNA repair"/>
    <property type="evidence" value="ECO:0000305"/>
    <property type="project" value="PomBase"/>
</dbReference>
<dbReference type="GO" id="GO:0000002">
    <property type="term" value="P:mitochondrial genome maintenance"/>
    <property type="evidence" value="ECO:0000318"/>
    <property type="project" value="GO_Central"/>
</dbReference>
<dbReference type="GO" id="GO:0000725">
    <property type="term" value="P:recombinational repair"/>
    <property type="evidence" value="ECO:0000318"/>
    <property type="project" value="GO_Central"/>
</dbReference>
<dbReference type="InterPro" id="IPR009446">
    <property type="entry name" value="Mgm101"/>
</dbReference>
<dbReference type="PANTHER" id="PTHR31404">
    <property type="entry name" value="MITOCHONDRIAL GENOME MAINTENANCE PROTEIN MGM101"/>
    <property type="match status" value="1"/>
</dbReference>
<dbReference type="PANTHER" id="PTHR31404:SF0">
    <property type="entry name" value="MITOCHONDRIAL GENOME MAINTENANCE PROTEIN MGM101"/>
    <property type="match status" value="1"/>
</dbReference>
<dbReference type="Pfam" id="PF06420">
    <property type="entry name" value="Mgm101p"/>
    <property type="match status" value="1"/>
</dbReference>
<name>MG101_SCHPO</name>
<gene>
    <name type="primary">mgm101</name>
    <name type="ORF">SPBC30D10.08</name>
</gene>